<feature type="chain" id="PRO_1000130136" description="tRNA (guanine-N(1)-)-methyltransferase">
    <location>
        <begin position="1"/>
        <end position="288"/>
    </location>
</feature>
<feature type="region of interest" description="Disordered" evidence="2">
    <location>
        <begin position="82"/>
        <end position="105"/>
    </location>
</feature>
<feature type="compositionally biased region" description="Low complexity" evidence="2">
    <location>
        <begin position="89"/>
        <end position="105"/>
    </location>
</feature>
<feature type="binding site" evidence="1">
    <location>
        <position position="137"/>
    </location>
    <ligand>
        <name>S-adenosyl-L-methionine</name>
        <dbReference type="ChEBI" id="CHEBI:59789"/>
    </ligand>
</feature>
<feature type="binding site" evidence="1">
    <location>
        <begin position="162"/>
        <end position="167"/>
    </location>
    <ligand>
        <name>S-adenosyl-L-methionine</name>
        <dbReference type="ChEBI" id="CHEBI:59789"/>
    </ligand>
</feature>
<gene>
    <name evidence="1" type="primary">trmD</name>
    <name type="ordered locus">BLD_1085</name>
</gene>
<protein>
    <recommendedName>
        <fullName evidence="1">tRNA (guanine-N(1)-)-methyltransferase</fullName>
        <ecNumber evidence="1">2.1.1.228</ecNumber>
    </recommendedName>
    <alternativeName>
        <fullName evidence="1">M1G-methyltransferase</fullName>
    </alternativeName>
    <alternativeName>
        <fullName evidence="1">tRNA [GM37] methyltransferase</fullName>
    </alternativeName>
</protein>
<sequence>MKIDIVSVFPEYFEVMNLSLMGKAQAKGLLEIKAHNLRDWTHDVHHSVDDTPVGGGAGMVMKPEVWSECLDELLGFSQPSAATDAVDTSDPGDSAAPDSSAPSGAPVLIFPNPSAPLFTQRDATELSHADHLLFGCGRYEGYDARIPDYYRAQGVDVREYSIGDYVLNGGEVAVSVMLEAITRLMPGFMGNPDSIVEESYTGEGALLEHRQYTKPAVWRGIAVPDVLLSGDHGKVDRFRRDEALARTAEIRPDLIAALDCKALDKADRKTLMALGWEVSAAHPRRLAD</sequence>
<comment type="function">
    <text evidence="1">Specifically methylates guanosine-37 in various tRNAs.</text>
</comment>
<comment type="catalytic activity">
    <reaction evidence="1">
        <text>guanosine(37) in tRNA + S-adenosyl-L-methionine = N(1)-methylguanosine(37) in tRNA + S-adenosyl-L-homocysteine + H(+)</text>
        <dbReference type="Rhea" id="RHEA:36899"/>
        <dbReference type="Rhea" id="RHEA-COMP:10145"/>
        <dbReference type="Rhea" id="RHEA-COMP:10147"/>
        <dbReference type="ChEBI" id="CHEBI:15378"/>
        <dbReference type="ChEBI" id="CHEBI:57856"/>
        <dbReference type="ChEBI" id="CHEBI:59789"/>
        <dbReference type="ChEBI" id="CHEBI:73542"/>
        <dbReference type="ChEBI" id="CHEBI:74269"/>
        <dbReference type="EC" id="2.1.1.228"/>
    </reaction>
</comment>
<comment type="subunit">
    <text evidence="1">Homodimer.</text>
</comment>
<comment type="subcellular location">
    <subcellularLocation>
        <location evidence="1">Cytoplasm</location>
    </subcellularLocation>
</comment>
<comment type="similarity">
    <text evidence="1">Belongs to the RNA methyltransferase TrmD family.</text>
</comment>
<organism>
    <name type="scientific">Bifidobacterium longum (strain DJO10A)</name>
    <dbReference type="NCBI Taxonomy" id="205913"/>
    <lineage>
        <taxon>Bacteria</taxon>
        <taxon>Bacillati</taxon>
        <taxon>Actinomycetota</taxon>
        <taxon>Actinomycetes</taxon>
        <taxon>Bifidobacteriales</taxon>
        <taxon>Bifidobacteriaceae</taxon>
        <taxon>Bifidobacterium</taxon>
    </lineage>
</organism>
<proteinExistence type="inferred from homology"/>
<keyword id="KW-0963">Cytoplasm</keyword>
<keyword id="KW-0489">Methyltransferase</keyword>
<keyword id="KW-0949">S-adenosyl-L-methionine</keyword>
<keyword id="KW-0808">Transferase</keyword>
<keyword id="KW-0819">tRNA processing</keyword>
<reference key="1">
    <citation type="journal article" date="2008" name="BMC Genomics">
        <title>Comparative genomic analysis of the gut bacterium Bifidobacterium longum reveals loci susceptible to deletion during pure culture growth.</title>
        <authorList>
            <person name="Lee J.H."/>
            <person name="Karamychev V.N."/>
            <person name="Kozyavkin S.A."/>
            <person name="Mills D."/>
            <person name="Pavlov A.R."/>
            <person name="Pavlova N.V."/>
            <person name="Polouchine N.N."/>
            <person name="Richardson P.M."/>
            <person name="Shakhova V.V."/>
            <person name="Slesarev A.I."/>
            <person name="Weimer B."/>
            <person name="O'Sullivan D.J."/>
        </authorList>
    </citation>
    <scope>NUCLEOTIDE SEQUENCE [LARGE SCALE GENOMIC DNA]</scope>
    <source>
        <strain>DJO10A</strain>
    </source>
</reference>
<accession>B3DTR2</accession>
<name>TRMD_BIFLD</name>
<dbReference type="EC" id="2.1.1.228" evidence="1"/>
<dbReference type="EMBL" id="CP000605">
    <property type="protein sequence ID" value="ACD98531.1"/>
    <property type="molecule type" value="Genomic_DNA"/>
</dbReference>
<dbReference type="RefSeq" id="WP_010081144.1">
    <property type="nucleotide sequence ID" value="NZ_AABM02000007.1"/>
</dbReference>
<dbReference type="SMR" id="B3DTR2"/>
<dbReference type="KEGG" id="blj:BLD_1085"/>
<dbReference type="HOGENOM" id="CLU_047363_0_0_11"/>
<dbReference type="Proteomes" id="UP000002419">
    <property type="component" value="Chromosome"/>
</dbReference>
<dbReference type="GO" id="GO:0005829">
    <property type="term" value="C:cytosol"/>
    <property type="evidence" value="ECO:0007669"/>
    <property type="project" value="TreeGrafter"/>
</dbReference>
<dbReference type="GO" id="GO:0052906">
    <property type="term" value="F:tRNA (guanine(37)-N1)-methyltransferase activity"/>
    <property type="evidence" value="ECO:0007669"/>
    <property type="project" value="UniProtKB-UniRule"/>
</dbReference>
<dbReference type="GO" id="GO:0002939">
    <property type="term" value="P:tRNA N1-guanine methylation"/>
    <property type="evidence" value="ECO:0007669"/>
    <property type="project" value="TreeGrafter"/>
</dbReference>
<dbReference type="CDD" id="cd18080">
    <property type="entry name" value="TrmD-like"/>
    <property type="match status" value="1"/>
</dbReference>
<dbReference type="FunFam" id="1.10.1270.20:FF:000002">
    <property type="entry name" value="tRNA (guanine-N(1)-)-methyltransferase"/>
    <property type="match status" value="1"/>
</dbReference>
<dbReference type="Gene3D" id="3.40.1280.10">
    <property type="match status" value="1"/>
</dbReference>
<dbReference type="Gene3D" id="1.10.1270.20">
    <property type="entry name" value="tRNA(m1g37)methyltransferase, domain 2"/>
    <property type="match status" value="1"/>
</dbReference>
<dbReference type="HAMAP" id="MF_00605">
    <property type="entry name" value="TrmD"/>
    <property type="match status" value="1"/>
</dbReference>
<dbReference type="InterPro" id="IPR029028">
    <property type="entry name" value="Alpha/beta_knot_MTases"/>
</dbReference>
<dbReference type="InterPro" id="IPR023148">
    <property type="entry name" value="tRNA_m1G_MeTrfase_C_sf"/>
</dbReference>
<dbReference type="InterPro" id="IPR002649">
    <property type="entry name" value="tRNA_m1G_MeTrfase_TrmD"/>
</dbReference>
<dbReference type="InterPro" id="IPR029026">
    <property type="entry name" value="tRNA_m1G_MTases_N"/>
</dbReference>
<dbReference type="InterPro" id="IPR016009">
    <property type="entry name" value="tRNA_MeTrfase_TRMD/TRM10"/>
</dbReference>
<dbReference type="NCBIfam" id="NF000648">
    <property type="entry name" value="PRK00026.1"/>
    <property type="match status" value="1"/>
</dbReference>
<dbReference type="PANTHER" id="PTHR46417">
    <property type="entry name" value="TRNA (GUANINE-N(1)-)-METHYLTRANSFERASE"/>
    <property type="match status" value="1"/>
</dbReference>
<dbReference type="PANTHER" id="PTHR46417:SF1">
    <property type="entry name" value="TRNA (GUANINE-N(1)-)-METHYLTRANSFERASE"/>
    <property type="match status" value="1"/>
</dbReference>
<dbReference type="Pfam" id="PF01746">
    <property type="entry name" value="tRNA_m1G_MT"/>
    <property type="match status" value="2"/>
</dbReference>
<dbReference type="PIRSF" id="PIRSF000386">
    <property type="entry name" value="tRNA_mtase"/>
    <property type="match status" value="1"/>
</dbReference>
<dbReference type="SUPFAM" id="SSF75217">
    <property type="entry name" value="alpha/beta knot"/>
    <property type="match status" value="1"/>
</dbReference>
<evidence type="ECO:0000255" key="1">
    <source>
        <dbReference type="HAMAP-Rule" id="MF_00605"/>
    </source>
</evidence>
<evidence type="ECO:0000256" key="2">
    <source>
        <dbReference type="SAM" id="MobiDB-lite"/>
    </source>
</evidence>